<sequence length="329" mass="37817">MITTLLRRSLLDASKQATSINGILFHQLAPAKYFRVPAVGGLRDFSKMTFEKKKTSEEEEGSGDGVKVNDQGNKGEQLIVSYWGVKPMKITKEDGTEWKWSCFRPWETYKADLTIDLKKHHVPSTLPDKIAYWMVKSLRWPTDLFFQRRYGCRAIMLETVAAVPGMVGGMLMHFKSLRRFEQSGGWIKALLEEAENERMHLMTFMEVAKPKWYERALVISVQGVFFNAYLIGYIISPKFAHRMVGYLEEEAIHSYTEFLKELDNGNIENVPAPAIAVDYWRLEADATLRDVVMVVRADEAHHRDVNHYASDIHYQGHELKEAPAPIGYH</sequence>
<evidence type="ECO:0000250" key="1"/>
<evidence type="ECO:0000250" key="2">
    <source>
        <dbReference type="UniProtKB" id="Q26710"/>
    </source>
</evidence>
<evidence type="ECO:0000250" key="3">
    <source>
        <dbReference type="UniProtKB" id="Q39219"/>
    </source>
</evidence>
<evidence type="ECO:0000250" key="4">
    <source>
        <dbReference type="UniProtKB" id="Q41224"/>
    </source>
</evidence>
<evidence type="ECO:0000255" key="5"/>
<evidence type="ECO:0000269" key="6">
    <source>
    </source>
</evidence>
<evidence type="ECO:0000269" key="7">
    <source>
    </source>
</evidence>
<evidence type="ECO:0000269" key="8">
    <source>
    </source>
</evidence>
<evidence type="ECO:0000269" key="9">
    <source>
    </source>
</evidence>
<evidence type="ECO:0000269" key="10">
    <source>
    </source>
</evidence>
<evidence type="ECO:0000269" key="11">
    <source>
    </source>
</evidence>
<evidence type="ECO:0000269" key="12">
    <source>
    </source>
</evidence>
<evidence type="ECO:0000269" key="13">
    <source>
    </source>
</evidence>
<evidence type="ECO:0000305" key="14"/>
<evidence type="ECO:0000305" key="15">
    <source>
    </source>
</evidence>
<proteinExistence type="evidence at protein level"/>
<protein>
    <recommendedName>
        <fullName>Ubiquinol oxidase 1c, mitochondrial</fullName>
        <ecNumber>1.10.3.11</ecNumber>
    </recommendedName>
    <alternativeName>
        <fullName>Alternative oxidase 1c</fullName>
    </alternativeName>
</protein>
<feature type="transit peptide" description="Mitochondrion" evidence="5">
    <location>
        <begin position="1"/>
        <end position="45"/>
    </location>
</feature>
<feature type="chain" id="PRO_0000001733" description="Ubiquinol oxidase 1c, mitochondrial">
    <location>
        <begin position="46"/>
        <end position="329"/>
    </location>
</feature>
<feature type="transmembrane region" description="Helical" evidence="5">
    <location>
        <begin position="154"/>
        <end position="174"/>
    </location>
</feature>
<feature type="transmembrane region" description="Helical" evidence="5">
    <location>
        <begin position="216"/>
        <end position="236"/>
    </location>
</feature>
<feature type="binding site" evidence="2">
    <location>
        <position position="158"/>
    </location>
    <ligand>
        <name>Fe cation</name>
        <dbReference type="ChEBI" id="CHEBI:24875"/>
        <label>1</label>
    </ligand>
</feature>
<feature type="binding site" evidence="2">
    <location>
        <position position="197"/>
    </location>
    <ligand>
        <name>Fe cation</name>
        <dbReference type="ChEBI" id="CHEBI:24875"/>
        <label>1</label>
    </ligand>
</feature>
<feature type="binding site" evidence="2">
    <location>
        <position position="197"/>
    </location>
    <ligand>
        <name>Fe cation</name>
        <dbReference type="ChEBI" id="CHEBI:24875"/>
        <label>2</label>
    </ligand>
</feature>
<feature type="binding site" evidence="2">
    <location>
        <position position="200"/>
    </location>
    <ligand>
        <name>Fe cation</name>
        <dbReference type="ChEBI" id="CHEBI:24875"/>
        <label>1</label>
    </ligand>
</feature>
<feature type="binding site" evidence="2">
    <location>
        <position position="248"/>
    </location>
    <ligand>
        <name>Fe cation</name>
        <dbReference type="ChEBI" id="CHEBI:24875"/>
        <label>2</label>
    </ligand>
</feature>
<feature type="binding site" evidence="2">
    <location>
        <position position="299"/>
    </location>
    <ligand>
        <name>Fe cation</name>
        <dbReference type="ChEBI" id="CHEBI:24875"/>
        <label>1</label>
    </ligand>
</feature>
<feature type="binding site" evidence="2">
    <location>
        <position position="299"/>
    </location>
    <ligand>
        <name>Fe cation</name>
        <dbReference type="ChEBI" id="CHEBI:24875"/>
        <label>2</label>
    </ligand>
</feature>
<feature type="binding site" evidence="2">
    <location>
        <position position="302"/>
    </location>
    <ligand>
        <name>Fe cation</name>
        <dbReference type="ChEBI" id="CHEBI:24875"/>
        <label>2</label>
    </ligand>
</feature>
<feature type="disulfide bond" description="Interchain" evidence="4">
    <location>
        <position position="102"/>
    </location>
</feature>
<accession>O22048</accession>
<organism>
    <name type="scientific">Arabidopsis thaliana</name>
    <name type="common">Mouse-ear cress</name>
    <dbReference type="NCBI Taxonomy" id="3702"/>
    <lineage>
        <taxon>Eukaryota</taxon>
        <taxon>Viridiplantae</taxon>
        <taxon>Streptophyta</taxon>
        <taxon>Embryophyta</taxon>
        <taxon>Tracheophyta</taxon>
        <taxon>Spermatophyta</taxon>
        <taxon>Magnoliopsida</taxon>
        <taxon>eudicotyledons</taxon>
        <taxon>Gunneridae</taxon>
        <taxon>Pentapetalae</taxon>
        <taxon>rosids</taxon>
        <taxon>malvids</taxon>
        <taxon>Brassicales</taxon>
        <taxon>Brassicaceae</taxon>
        <taxon>Camelineae</taxon>
        <taxon>Arabidopsis</taxon>
    </lineage>
</organism>
<reference key="1">
    <citation type="journal article" date="1997" name="Plant Mol. Biol.">
        <title>Characterization of the gene family for alternative oxidase from Arabidopsis thaliana.</title>
        <authorList>
            <person name="Saisho D."/>
            <person name="Nambara E."/>
            <person name="Naito S."/>
            <person name="Tsutsumi N."/>
            <person name="Hirai A."/>
            <person name="Nakazono M."/>
        </authorList>
    </citation>
    <scope>NUCLEOTIDE SEQUENCE [GENOMIC DNA]</scope>
    <scope>INDUCTION BY ANTIMYCIN A</scope>
    <scope>TISSUE SPECIFICITY</scope>
    <source>
        <strain>cv. Columbia</strain>
        <tissue>Leaf</tissue>
        <tissue>Stem</tissue>
    </source>
</reference>
<reference key="2">
    <citation type="journal article" date="2000" name="DNA Res.">
        <title>Structural analysis of Arabidopsis thaliana chromosome 3. I. Sequence features of the regions of 4,504,864 bp covered by sixty P1 and TAC clones.</title>
        <authorList>
            <person name="Sato S."/>
            <person name="Nakamura Y."/>
            <person name="Kaneko T."/>
            <person name="Katoh T."/>
            <person name="Asamizu E."/>
            <person name="Tabata S."/>
        </authorList>
    </citation>
    <scope>NUCLEOTIDE SEQUENCE [LARGE SCALE GENOMIC DNA]</scope>
    <source>
        <strain>cv. Columbia</strain>
    </source>
</reference>
<reference key="3">
    <citation type="journal article" date="2017" name="Plant J.">
        <title>Araport11: a complete reannotation of the Arabidopsis thaliana reference genome.</title>
        <authorList>
            <person name="Cheng C.Y."/>
            <person name="Krishnakumar V."/>
            <person name="Chan A.P."/>
            <person name="Thibaud-Nissen F."/>
            <person name="Schobel S."/>
            <person name="Town C.D."/>
        </authorList>
    </citation>
    <scope>GENOME REANNOTATION</scope>
    <source>
        <strain>cv. Columbia</strain>
    </source>
</reference>
<reference key="4">
    <citation type="journal article" date="2003" name="Science">
        <title>Empirical analysis of transcriptional activity in the Arabidopsis genome.</title>
        <authorList>
            <person name="Yamada K."/>
            <person name="Lim J."/>
            <person name="Dale J.M."/>
            <person name="Chen H."/>
            <person name="Shinn P."/>
            <person name="Palm C.J."/>
            <person name="Southwick A.M."/>
            <person name="Wu H.C."/>
            <person name="Kim C.J."/>
            <person name="Nguyen M."/>
            <person name="Pham P.K."/>
            <person name="Cheuk R.F."/>
            <person name="Karlin-Newmann G."/>
            <person name="Liu S.X."/>
            <person name="Lam B."/>
            <person name="Sakano H."/>
            <person name="Wu T."/>
            <person name="Yu G."/>
            <person name="Miranda M."/>
            <person name="Quach H.L."/>
            <person name="Tripp M."/>
            <person name="Chang C.H."/>
            <person name="Lee J.M."/>
            <person name="Toriumi M.J."/>
            <person name="Chan M.M."/>
            <person name="Tang C.C."/>
            <person name="Onodera C.S."/>
            <person name="Deng J.M."/>
            <person name="Akiyama K."/>
            <person name="Ansari Y."/>
            <person name="Arakawa T."/>
            <person name="Banh J."/>
            <person name="Banno F."/>
            <person name="Bowser L."/>
            <person name="Brooks S.Y."/>
            <person name="Carninci P."/>
            <person name="Chao Q."/>
            <person name="Choy N."/>
            <person name="Enju A."/>
            <person name="Goldsmith A.D."/>
            <person name="Gurjal M."/>
            <person name="Hansen N.F."/>
            <person name="Hayashizaki Y."/>
            <person name="Johnson-Hopson C."/>
            <person name="Hsuan V.W."/>
            <person name="Iida K."/>
            <person name="Karnes M."/>
            <person name="Khan S."/>
            <person name="Koesema E."/>
            <person name="Ishida J."/>
            <person name="Jiang P.X."/>
            <person name="Jones T."/>
            <person name="Kawai J."/>
            <person name="Kamiya A."/>
            <person name="Meyers C."/>
            <person name="Nakajima M."/>
            <person name="Narusaka M."/>
            <person name="Seki M."/>
            <person name="Sakurai T."/>
            <person name="Satou M."/>
            <person name="Tamse R."/>
            <person name="Vaysberg M."/>
            <person name="Wallender E.K."/>
            <person name="Wong C."/>
            <person name="Yamamura Y."/>
            <person name="Yuan S."/>
            <person name="Shinozaki K."/>
            <person name="Davis R.W."/>
            <person name="Theologis A."/>
            <person name="Ecker J.R."/>
        </authorList>
    </citation>
    <scope>NUCLEOTIDE SEQUENCE [LARGE SCALE MRNA]</scope>
    <source>
        <strain>cv. Columbia</strain>
    </source>
</reference>
<reference key="5">
    <citation type="journal article" date="1999" name="FEBS Lett.">
        <title>A revised model of the active site of alternative oxidase.</title>
        <authorList>
            <person name="Andersson M.E."/>
            <person name="Nordlund P."/>
        </authorList>
    </citation>
    <scope>IRON-BINDING SITES</scope>
</reference>
<reference key="6">
    <citation type="journal article" date="2001" name="Genes Genet. Syst.">
        <title>The gene for alternative oxidase-2 (AOX2) from Arabidopsis thaliana consists of five exons unlike other AOX genes and is transcribed at an early stage during germination.</title>
        <authorList>
            <person name="Saisho D."/>
            <person name="Nakazono M."/>
            <person name="Lee K.-H."/>
            <person name="Tsutsumi N."/>
            <person name="Akita S."/>
            <person name="Hirai A."/>
        </authorList>
    </citation>
    <scope>DEVELOPMENTAL STAGE</scope>
    <source>
        <strain>cv. Columbia GL1</strain>
    </source>
</reference>
<reference key="7">
    <citation type="journal article" date="2004" name="Plant Cell">
        <title>Experimental analysis of the Arabidopsis mitochondrial proteome highlights signaling and regulatory components, provides assessment of targeting prediction programs, and indicates plant-specific mitochondrial proteins.</title>
        <authorList>
            <person name="Heazlewood J.L."/>
            <person name="Tonti-Filippini J.S."/>
            <person name="Gout A.M."/>
            <person name="Day D.A."/>
            <person name="Whelan J."/>
            <person name="Millar A.H."/>
        </authorList>
    </citation>
    <scope>IDENTIFICATION BY MASS SPECTROMETRY</scope>
    <scope>SUBCELLULAR LOCATION [LARGE SCALE ANALYSIS]</scope>
    <source>
        <strain>cv. Landsberg erecta</strain>
    </source>
</reference>
<reference key="8">
    <citation type="journal article" date="2005" name="Plant Mol. Biol.">
        <title>Stress-induced co-expression of alternative respiratory chain components in Arabidopsis thaliana.</title>
        <authorList>
            <person name="Clifton R."/>
            <person name="Lister R."/>
            <person name="Parker K.L."/>
            <person name="Sappl P.G."/>
            <person name="Elhafez D."/>
            <person name="Millar A.H."/>
            <person name="Day D.A."/>
            <person name="Whelan J."/>
        </authorList>
    </citation>
    <scope>INDUCTION BY ABIOTIC STRESSES</scope>
</reference>
<reference key="9">
    <citation type="journal article" date="2006" name="Biochim. Biophys. Acta">
        <title>Alternative oxidases in Arabidopsis: a comparative analysis of differential expression in the gene family provides new insights into function of non-phosphorylating bypasses.</title>
        <authorList>
            <person name="Clifton R."/>
            <person name="Millar A.H."/>
            <person name="Whelan J."/>
        </authorList>
    </citation>
    <scope>DEVELOPMENTAL STAGE</scope>
    <scope>TISSUE SPECIFICITY</scope>
</reference>
<reference key="10">
    <citation type="journal article" date="2006" name="Plant Cell Physiol.">
        <title>Characterization of mitochondrial alternative NAD(P)H dehydrogenases in Arabidopsis: intraorganelle location and expression.</title>
        <authorList>
            <person name="Elhafez D."/>
            <person name="Murcha M.W."/>
            <person name="Clifton R."/>
            <person name="Soole K.L."/>
            <person name="Day D.A."/>
            <person name="Whelan J."/>
        </authorList>
    </citation>
    <scope>TISSUE SPECIFICITY</scope>
</reference>
<reference key="11">
    <citation type="journal article" date="2007" name="Plant Cell Physiol.">
        <title>Alternative oxidase involvement in cold stress response of Arabidopsis thaliana fad2 and FAD3+ cell suspensions altered in membrane lipid composition.</title>
        <authorList>
            <person name="Matos A.R."/>
            <person name="Hourton-Cabassa C."/>
            <person name="Cicek D."/>
            <person name="Reze N."/>
            <person name="Arrabaca J.D."/>
            <person name="Zachowski A."/>
            <person name="Moreau F."/>
        </authorList>
    </citation>
    <scope>INDUCTION BY COLD</scope>
</reference>
<reference key="12">
    <citation type="journal article" date="2009" name="Plant Cell Physiol.">
        <title>Differential gene expression profiles of the mitochondrial respiratory components in illuminated Arabidopsis leaves.</title>
        <authorList>
            <person name="Yoshida K."/>
            <person name="Noguchi K."/>
        </authorList>
    </citation>
    <scope>INDUCTION BY HIGH LIGHT</scope>
</reference>
<reference key="13">
    <citation type="journal article" date="2012" name="Planta">
        <title>Involvement of hydrogen peroxide, calcium, and ethylene in the induction of the alternative pathway in chilling-stressed Arabidopsis callus.</title>
        <authorList>
            <person name="Wang H."/>
            <person name="Huang J."/>
            <person name="Liang X."/>
            <person name="Bi Y."/>
        </authorList>
    </citation>
    <scope>INDUCTION BY COLD AND ETHYLENE</scope>
</reference>
<name>AOX1C_ARATH</name>
<dbReference type="EC" id="1.10.3.11"/>
<dbReference type="EMBL" id="AB003175">
    <property type="protein sequence ID" value="BAA22635.1"/>
    <property type="molecule type" value="Genomic_DNA"/>
</dbReference>
<dbReference type="EMBL" id="AB018114">
    <property type="protein sequence ID" value="BAB02686.1"/>
    <property type="molecule type" value="Genomic_DNA"/>
</dbReference>
<dbReference type="EMBL" id="CP002686">
    <property type="protein sequence ID" value="AEE77345.1"/>
    <property type="molecule type" value="Genomic_DNA"/>
</dbReference>
<dbReference type="EMBL" id="BT004153">
    <property type="protein sequence ID" value="AAO42174.1"/>
    <property type="molecule type" value="mRNA"/>
</dbReference>
<dbReference type="EMBL" id="BT005467">
    <property type="protein sequence ID" value="AAO63887.1"/>
    <property type="molecule type" value="mRNA"/>
</dbReference>
<dbReference type="RefSeq" id="NP_189399.1">
    <property type="nucleotide sequence ID" value="NM_113678.3"/>
</dbReference>
<dbReference type="SMR" id="O22048"/>
<dbReference type="STRING" id="3702.O22048"/>
<dbReference type="PaxDb" id="3702-AT3G27620.1"/>
<dbReference type="ProteomicsDB" id="244414"/>
<dbReference type="EnsemblPlants" id="AT3G27620.1">
    <property type="protein sequence ID" value="AT3G27620.1"/>
    <property type="gene ID" value="AT3G27620"/>
</dbReference>
<dbReference type="GeneID" id="822384"/>
<dbReference type="Gramene" id="AT3G27620.1">
    <property type="protein sequence ID" value="AT3G27620.1"/>
    <property type="gene ID" value="AT3G27620"/>
</dbReference>
<dbReference type="KEGG" id="ath:AT3G27620"/>
<dbReference type="Araport" id="AT3G27620"/>
<dbReference type="TAIR" id="AT3G27620">
    <property type="gene designation" value="AOX1C"/>
</dbReference>
<dbReference type="eggNOG" id="ENOG502QSB5">
    <property type="taxonomic scope" value="Eukaryota"/>
</dbReference>
<dbReference type="HOGENOM" id="CLU_041974_0_1_1"/>
<dbReference type="InParanoid" id="O22048"/>
<dbReference type="OMA" id="WWIMSAP"/>
<dbReference type="PhylomeDB" id="O22048"/>
<dbReference type="PRO" id="PR:O22048"/>
<dbReference type="Proteomes" id="UP000006548">
    <property type="component" value="Chromosome 3"/>
</dbReference>
<dbReference type="ExpressionAtlas" id="O22048">
    <property type="expression patterns" value="baseline and differential"/>
</dbReference>
<dbReference type="GO" id="GO:0005743">
    <property type="term" value="C:mitochondrial inner membrane"/>
    <property type="evidence" value="ECO:0007669"/>
    <property type="project" value="UniProtKB-SubCell"/>
</dbReference>
<dbReference type="GO" id="GO:0005739">
    <property type="term" value="C:mitochondrion"/>
    <property type="evidence" value="ECO:0000314"/>
    <property type="project" value="TAIR"/>
</dbReference>
<dbReference type="GO" id="GO:0009916">
    <property type="term" value="F:alternative oxidase activity"/>
    <property type="evidence" value="ECO:0000250"/>
    <property type="project" value="TAIR"/>
</dbReference>
<dbReference type="GO" id="GO:0046872">
    <property type="term" value="F:metal ion binding"/>
    <property type="evidence" value="ECO:0007669"/>
    <property type="project" value="UniProtKB-KW"/>
</dbReference>
<dbReference type="GO" id="GO:0106292">
    <property type="term" value="F:superoxide-generating NADPH oxidase activity"/>
    <property type="evidence" value="ECO:0000314"/>
    <property type="project" value="TAIR"/>
</dbReference>
<dbReference type="GO" id="GO:0102721">
    <property type="term" value="F:ubiquinol:oxygen oxidoreductase activity"/>
    <property type="evidence" value="ECO:0007669"/>
    <property type="project" value="UniProtKB-EC"/>
</dbReference>
<dbReference type="CDD" id="cd01053">
    <property type="entry name" value="AOX"/>
    <property type="match status" value="1"/>
</dbReference>
<dbReference type="FunFam" id="1.20.1260.140:FF:000001">
    <property type="entry name" value="Ubiquinol oxidase"/>
    <property type="match status" value="1"/>
</dbReference>
<dbReference type="Gene3D" id="1.20.1260.140">
    <property type="entry name" value="Alternative oxidase"/>
    <property type="match status" value="1"/>
</dbReference>
<dbReference type="InterPro" id="IPR002680">
    <property type="entry name" value="AOX"/>
</dbReference>
<dbReference type="InterPro" id="IPR038659">
    <property type="entry name" value="AOX_sf"/>
</dbReference>
<dbReference type="PANTHER" id="PTHR31803">
    <property type="entry name" value="ALTERNATIVE OXIDASE"/>
    <property type="match status" value="1"/>
</dbReference>
<dbReference type="PANTHER" id="PTHR31803:SF18">
    <property type="entry name" value="UBIQUINOL OXIDASE 1B, MITOCHONDRIAL-RELATED"/>
    <property type="match status" value="1"/>
</dbReference>
<dbReference type="Pfam" id="PF01786">
    <property type="entry name" value="AOX"/>
    <property type="match status" value="1"/>
</dbReference>
<comment type="function">
    <text evidence="1">Catalyzes the cyanide-resistant oxidation of ubiquinol and the reduction of molecular oxygen to water, but does not translocate protons and consequently is not linked to oxidative phosphorylation. May increase respiration when the cytochrome respiratory pathway is restricted, or in response to low temperatures (By similarity).</text>
</comment>
<comment type="catalytic activity">
    <reaction>
        <text>2 a ubiquinol + O2 = 2 a ubiquinone + 2 H2O</text>
        <dbReference type="Rhea" id="RHEA:30255"/>
        <dbReference type="Rhea" id="RHEA-COMP:9565"/>
        <dbReference type="Rhea" id="RHEA-COMP:9566"/>
        <dbReference type="ChEBI" id="CHEBI:15377"/>
        <dbReference type="ChEBI" id="CHEBI:15379"/>
        <dbReference type="ChEBI" id="CHEBI:16389"/>
        <dbReference type="ChEBI" id="CHEBI:17976"/>
        <dbReference type="EC" id="1.10.3.11"/>
    </reaction>
</comment>
<comment type="cofactor">
    <cofactor evidence="3">
        <name>Fe cation</name>
        <dbReference type="ChEBI" id="CHEBI:24875"/>
    </cofactor>
    <text evidence="3">Binds 2 iron ions per subunit.</text>
</comment>
<comment type="subunit">
    <text evidence="14">Homodimer; disulfide-linked.</text>
</comment>
<comment type="subcellular location">
    <subcellularLocation>
        <location evidence="15">Mitochondrion inner membrane</location>
        <topology evidence="15">Multi-pass membrane protein</topology>
    </subcellularLocation>
    <text>Mitochondrial, possibly in the inner surface of the inner mitochondrial membrane.</text>
</comment>
<comment type="tissue specificity">
    <text evidence="8 9 13">Expressed in roots, stems, leaves, cotyledons and flowers. High expression in stamens.</text>
</comment>
<comment type="developmental stage">
    <text evidence="6 9">Expressed ubiquitously. Not detected during germination.</text>
</comment>
<comment type="induction">
    <text evidence="7 10 11 12 13">No effect of antimycin A. Up-regulated by ethylene, high light, glucose, cysteine, mannitol, salicylic acid and cold treatments.</text>
</comment>
<comment type="similarity">
    <text evidence="14">Belongs to the alternative oxidase family.</text>
</comment>
<keyword id="KW-1015">Disulfide bond</keyword>
<keyword id="KW-0249">Electron transport</keyword>
<keyword id="KW-0408">Iron</keyword>
<keyword id="KW-0472">Membrane</keyword>
<keyword id="KW-0479">Metal-binding</keyword>
<keyword id="KW-0496">Mitochondrion</keyword>
<keyword id="KW-0999">Mitochondrion inner membrane</keyword>
<keyword id="KW-0560">Oxidoreductase</keyword>
<keyword id="KW-1185">Reference proteome</keyword>
<keyword id="KW-0679">Respiratory chain</keyword>
<keyword id="KW-0809">Transit peptide</keyword>
<keyword id="KW-0812">Transmembrane</keyword>
<keyword id="KW-1133">Transmembrane helix</keyword>
<keyword id="KW-0813">Transport</keyword>
<gene>
    <name type="primary">AOX1C</name>
    <name type="ordered locus">At3g27620</name>
    <name type="ORF">MGF10.3</name>
</gene>